<proteinExistence type="evidence at transcript level"/>
<keyword id="KW-1185">Reference proteome</keyword>
<keyword id="KW-0687">Ribonucleoprotein</keyword>
<keyword id="KW-0689">Ribosomal protein</keyword>
<reference key="1">
    <citation type="submission" date="2001-10" db="EMBL/GenBank/DDBJ databases">
        <title>rp49 is constitutively expressed in the brain during honey bee adult behavioral development.</title>
        <authorList>
            <person name="Ben-Shahar Y."/>
            <person name="Robinson G.E."/>
        </authorList>
    </citation>
    <scope>NUCLEOTIDE SEQUENCE [MRNA]</scope>
</reference>
<sequence>MAIRPVYRPTIVKKRTKKFIRHQSDRYSKLKRNWRKPKGIDNRVRRRFKGQYLMPNIGYGSNKKTRHMLPTGFRKVLVHNVKELEVLMMQNRKFCAEIAHGGSSKKRKSIVERAQQLSIRVTYASARLRSQENE</sequence>
<name>RL32_APIME</name>
<dbReference type="EMBL" id="AF441189">
    <property type="protein sequence ID" value="AAL73401.1"/>
    <property type="molecule type" value="mRNA"/>
</dbReference>
<dbReference type="RefSeq" id="NP_001011587.1">
    <property type="nucleotide sequence ID" value="NM_001011587.1"/>
</dbReference>
<dbReference type="SMR" id="Q8WRF3"/>
<dbReference type="FunCoup" id="Q8WRF3">
    <property type="interactions" value="1586"/>
</dbReference>
<dbReference type="STRING" id="7460.Q8WRF3"/>
<dbReference type="PaxDb" id="7460-GB47227-PA"/>
<dbReference type="EnsemblMetazoa" id="NM_001011587">
    <property type="protein sequence ID" value="NP_001011587"/>
    <property type="gene ID" value="GeneID_406099"/>
</dbReference>
<dbReference type="GeneID" id="406099"/>
<dbReference type="KEGG" id="ame:406099"/>
<dbReference type="CTD" id="6161"/>
<dbReference type="eggNOG" id="KOG0878">
    <property type="taxonomic scope" value="Eukaryota"/>
</dbReference>
<dbReference type="InParanoid" id="Q8WRF3"/>
<dbReference type="OrthoDB" id="268693at2759"/>
<dbReference type="PhylomeDB" id="Q8WRF3"/>
<dbReference type="Proteomes" id="UP000005203">
    <property type="component" value="Linkage group LG11"/>
</dbReference>
<dbReference type="GO" id="GO:0022625">
    <property type="term" value="C:cytosolic large ribosomal subunit"/>
    <property type="evidence" value="ECO:0007669"/>
    <property type="project" value="TreeGrafter"/>
</dbReference>
<dbReference type="GO" id="GO:0003735">
    <property type="term" value="F:structural constituent of ribosome"/>
    <property type="evidence" value="ECO:0007669"/>
    <property type="project" value="InterPro"/>
</dbReference>
<dbReference type="GO" id="GO:0006412">
    <property type="term" value="P:translation"/>
    <property type="evidence" value="ECO:0007669"/>
    <property type="project" value="InterPro"/>
</dbReference>
<dbReference type="CDD" id="cd00513">
    <property type="entry name" value="Ribosomal_L32_L32e"/>
    <property type="match status" value="1"/>
</dbReference>
<dbReference type="InterPro" id="IPR001515">
    <property type="entry name" value="Ribosomal_eL32"/>
</dbReference>
<dbReference type="InterPro" id="IPR018263">
    <property type="entry name" value="Ribosomal_eL32_CS"/>
</dbReference>
<dbReference type="InterPro" id="IPR036351">
    <property type="entry name" value="Ribosomal_eL32_sf"/>
</dbReference>
<dbReference type="PANTHER" id="PTHR23413">
    <property type="entry name" value="60S RIBOSOMAL PROTEIN L32 AND DNA-DIRECTED RNA POLYMERASE II, SUBUNIT N"/>
    <property type="match status" value="1"/>
</dbReference>
<dbReference type="PANTHER" id="PTHR23413:SF1">
    <property type="entry name" value="RIBOSOMAL PROTEIN L32"/>
    <property type="match status" value="1"/>
</dbReference>
<dbReference type="Pfam" id="PF01655">
    <property type="entry name" value="Ribosomal_L32e"/>
    <property type="match status" value="1"/>
</dbReference>
<dbReference type="SMART" id="SM01393">
    <property type="entry name" value="Ribosomal_L32e"/>
    <property type="match status" value="1"/>
</dbReference>
<dbReference type="SUPFAM" id="SSF52042">
    <property type="entry name" value="Ribosomal protein L32e"/>
    <property type="match status" value="1"/>
</dbReference>
<dbReference type="PROSITE" id="PS00580">
    <property type="entry name" value="RIBOSOMAL_L32E"/>
    <property type="match status" value="1"/>
</dbReference>
<comment type="similarity">
    <text evidence="1">Belongs to the eukaryotic ribosomal protein eL32 family.</text>
</comment>
<evidence type="ECO:0000305" key="1"/>
<protein>
    <recommendedName>
        <fullName evidence="1">Large ribosomal subunit protein eL32</fullName>
    </recommendedName>
    <alternativeName>
        <fullName>60S ribosomal protein L32</fullName>
    </alternativeName>
    <alternativeName>
        <fullName>Ribosomal protein 49</fullName>
    </alternativeName>
</protein>
<organism>
    <name type="scientific">Apis mellifera</name>
    <name type="common">Honeybee</name>
    <dbReference type="NCBI Taxonomy" id="7460"/>
    <lineage>
        <taxon>Eukaryota</taxon>
        <taxon>Metazoa</taxon>
        <taxon>Ecdysozoa</taxon>
        <taxon>Arthropoda</taxon>
        <taxon>Hexapoda</taxon>
        <taxon>Insecta</taxon>
        <taxon>Pterygota</taxon>
        <taxon>Neoptera</taxon>
        <taxon>Endopterygota</taxon>
        <taxon>Hymenoptera</taxon>
        <taxon>Apocrita</taxon>
        <taxon>Aculeata</taxon>
        <taxon>Apoidea</taxon>
        <taxon>Anthophila</taxon>
        <taxon>Apidae</taxon>
        <taxon>Apis</taxon>
    </lineage>
</organism>
<feature type="chain" id="PRO_0000131121" description="Large ribosomal subunit protein eL32">
    <location>
        <begin position="1"/>
        <end position="134"/>
    </location>
</feature>
<gene>
    <name type="primary">RpL32</name>
    <name type="synonym">rp49</name>
</gene>
<accession>Q8WRF3</accession>